<accession>Q47NK1</accession>
<name>DUT_THEFY</name>
<protein>
    <recommendedName>
        <fullName evidence="1">Deoxyuridine 5'-triphosphate nucleotidohydrolase</fullName>
        <shortName evidence="1">dUTPase</shortName>
        <ecNumber evidence="1">3.6.1.23</ecNumber>
    </recommendedName>
    <alternativeName>
        <fullName evidence="1">dUTP pyrophosphatase</fullName>
    </alternativeName>
</protein>
<gene>
    <name evidence="1" type="primary">dut</name>
    <name type="ordered locus">Tfu_1935</name>
</gene>
<proteinExistence type="inferred from homology"/>
<keyword id="KW-0378">Hydrolase</keyword>
<keyword id="KW-0460">Magnesium</keyword>
<keyword id="KW-0479">Metal-binding</keyword>
<keyword id="KW-0546">Nucleotide metabolism</keyword>
<feature type="chain" id="PRO_0000231432" description="Deoxyuridine 5'-triphosphate nucleotidohydrolase">
    <location>
        <begin position="1"/>
        <end position="179"/>
    </location>
</feature>
<feature type="binding site" evidence="1">
    <location>
        <begin position="90"/>
        <end position="92"/>
    </location>
    <ligand>
        <name>substrate</name>
    </ligand>
</feature>
<feature type="binding site" evidence="1">
    <location>
        <position position="103"/>
    </location>
    <ligand>
        <name>substrate</name>
    </ligand>
</feature>
<feature type="binding site" evidence="1">
    <location>
        <begin position="107"/>
        <end position="109"/>
    </location>
    <ligand>
        <name>substrate</name>
    </ligand>
</feature>
<feature type="binding site" evidence="1">
    <location>
        <position position="117"/>
    </location>
    <ligand>
        <name>substrate</name>
    </ligand>
</feature>
<reference key="1">
    <citation type="journal article" date="2007" name="J. Bacteriol.">
        <title>Genome sequence and analysis of the soil cellulolytic actinomycete Thermobifida fusca YX.</title>
        <authorList>
            <person name="Lykidis A."/>
            <person name="Mavromatis K."/>
            <person name="Ivanova N."/>
            <person name="Anderson I."/>
            <person name="Land M."/>
            <person name="DiBartolo G."/>
            <person name="Martinez M."/>
            <person name="Lapidus A."/>
            <person name="Lucas S."/>
            <person name="Copeland A."/>
            <person name="Richardson P."/>
            <person name="Wilson D.B."/>
            <person name="Kyrpides N."/>
        </authorList>
    </citation>
    <scope>NUCLEOTIDE SEQUENCE [LARGE SCALE GENOMIC DNA]</scope>
    <source>
        <strain>YX</strain>
    </source>
</reference>
<dbReference type="EC" id="3.6.1.23" evidence="1"/>
<dbReference type="EMBL" id="CP000088">
    <property type="protein sequence ID" value="AAZ55968.1"/>
    <property type="molecule type" value="Genomic_DNA"/>
</dbReference>
<dbReference type="SMR" id="Q47NK1"/>
<dbReference type="STRING" id="269800.Tfu_1935"/>
<dbReference type="KEGG" id="tfu:Tfu_1935"/>
<dbReference type="eggNOG" id="COG0756">
    <property type="taxonomic scope" value="Bacteria"/>
</dbReference>
<dbReference type="HOGENOM" id="CLU_068508_1_3_11"/>
<dbReference type="UniPathway" id="UPA00610">
    <property type="reaction ID" value="UER00666"/>
</dbReference>
<dbReference type="GO" id="GO:0004170">
    <property type="term" value="F:dUTP diphosphatase activity"/>
    <property type="evidence" value="ECO:0007669"/>
    <property type="project" value="UniProtKB-UniRule"/>
</dbReference>
<dbReference type="GO" id="GO:0000287">
    <property type="term" value="F:magnesium ion binding"/>
    <property type="evidence" value="ECO:0007669"/>
    <property type="project" value="UniProtKB-UniRule"/>
</dbReference>
<dbReference type="GO" id="GO:0006226">
    <property type="term" value="P:dUMP biosynthetic process"/>
    <property type="evidence" value="ECO:0007669"/>
    <property type="project" value="UniProtKB-UniRule"/>
</dbReference>
<dbReference type="GO" id="GO:0046081">
    <property type="term" value="P:dUTP catabolic process"/>
    <property type="evidence" value="ECO:0007669"/>
    <property type="project" value="InterPro"/>
</dbReference>
<dbReference type="CDD" id="cd07557">
    <property type="entry name" value="trimeric_dUTPase"/>
    <property type="match status" value="1"/>
</dbReference>
<dbReference type="FunFam" id="2.70.40.10:FF:000008">
    <property type="entry name" value="Deoxyuridine 5'-triphosphate nucleotidohydrolase"/>
    <property type="match status" value="1"/>
</dbReference>
<dbReference type="Gene3D" id="2.70.40.10">
    <property type="match status" value="1"/>
</dbReference>
<dbReference type="HAMAP" id="MF_00116">
    <property type="entry name" value="dUTPase_bact"/>
    <property type="match status" value="1"/>
</dbReference>
<dbReference type="InterPro" id="IPR008181">
    <property type="entry name" value="dUTPase"/>
</dbReference>
<dbReference type="InterPro" id="IPR029054">
    <property type="entry name" value="dUTPase-like"/>
</dbReference>
<dbReference type="InterPro" id="IPR036157">
    <property type="entry name" value="dUTPase-like_sf"/>
</dbReference>
<dbReference type="InterPro" id="IPR033704">
    <property type="entry name" value="dUTPase_trimeric"/>
</dbReference>
<dbReference type="NCBIfam" id="TIGR00576">
    <property type="entry name" value="dut"/>
    <property type="match status" value="1"/>
</dbReference>
<dbReference type="NCBIfam" id="NF001862">
    <property type="entry name" value="PRK00601.1"/>
    <property type="match status" value="1"/>
</dbReference>
<dbReference type="PANTHER" id="PTHR11241">
    <property type="entry name" value="DEOXYURIDINE 5'-TRIPHOSPHATE NUCLEOTIDOHYDROLASE"/>
    <property type="match status" value="1"/>
</dbReference>
<dbReference type="PANTHER" id="PTHR11241:SF0">
    <property type="entry name" value="DEOXYURIDINE 5'-TRIPHOSPHATE NUCLEOTIDOHYDROLASE"/>
    <property type="match status" value="1"/>
</dbReference>
<dbReference type="Pfam" id="PF00692">
    <property type="entry name" value="dUTPase"/>
    <property type="match status" value="1"/>
</dbReference>
<dbReference type="SUPFAM" id="SSF51283">
    <property type="entry name" value="dUTPase-like"/>
    <property type="match status" value="1"/>
</dbReference>
<comment type="function">
    <text evidence="1">This enzyme is involved in nucleotide metabolism: it produces dUMP, the immediate precursor of thymidine nucleotides and it decreases the intracellular concentration of dUTP so that uracil cannot be incorporated into DNA.</text>
</comment>
<comment type="catalytic activity">
    <reaction evidence="1">
        <text>dUTP + H2O = dUMP + diphosphate + H(+)</text>
        <dbReference type="Rhea" id="RHEA:10248"/>
        <dbReference type="ChEBI" id="CHEBI:15377"/>
        <dbReference type="ChEBI" id="CHEBI:15378"/>
        <dbReference type="ChEBI" id="CHEBI:33019"/>
        <dbReference type="ChEBI" id="CHEBI:61555"/>
        <dbReference type="ChEBI" id="CHEBI:246422"/>
        <dbReference type="EC" id="3.6.1.23"/>
    </reaction>
</comment>
<comment type="cofactor">
    <cofactor evidence="1">
        <name>Mg(2+)</name>
        <dbReference type="ChEBI" id="CHEBI:18420"/>
    </cofactor>
</comment>
<comment type="pathway">
    <text evidence="1">Pyrimidine metabolism; dUMP biosynthesis; dUMP from dCTP (dUTP route): step 2/2.</text>
</comment>
<comment type="similarity">
    <text evidence="1">Belongs to the dUTPase family.</text>
</comment>
<organism>
    <name type="scientific">Thermobifida fusca (strain YX)</name>
    <dbReference type="NCBI Taxonomy" id="269800"/>
    <lineage>
        <taxon>Bacteria</taxon>
        <taxon>Bacillati</taxon>
        <taxon>Actinomycetota</taxon>
        <taxon>Actinomycetes</taxon>
        <taxon>Streptosporangiales</taxon>
        <taxon>Nocardiopsidaceae</taxon>
        <taxon>Thermobifida</taxon>
    </lineage>
</organism>
<evidence type="ECO:0000255" key="1">
    <source>
        <dbReference type="HAMAP-Rule" id="MF_00116"/>
    </source>
</evidence>
<sequence length="179" mass="18444">MGALRDVGRPPNAIGSAVVSDLSPVFGTVRVEIRRLDPDLPLPRYAHPGDAGADLVTAEDVVLAPGERATVRTGIAIALPDGYAAFIHPRSGLAARHGLTVVNAPGTVDAGYRGEIKVPLLNTDPATPVKLTRGDRIAQLVIQRVERAAFVEVDELSDSARGAGGFGSTGGHAAGAEQS</sequence>